<keyword id="KW-0150">Chloroplast</keyword>
<keyword id="KW-0275">Fatty acid biosynthesis</keyword>
<keyword id="KW-0276">Fatty acid metabolism</keyword>
<keyword id="KW-0378">Hydrolase</keyword>
<keyword id="KW-0444">Lipid biosynthesis</keyword>
<keyword id="KW-0443">Lipid metabolism</keyword>
<keyword id="KW-0934">Plastid</keyword>
<keyword id="KW-1185">Reference proteome</keyword>
<keyword id="KW-0809">Transit peptide</keyword>
<evidence type="ECO:0000255" key="1"/>
<evidence type="ECO:0000256" key="2">
    <source>
        <dbReference type="SAM" id="MobiDB-lite"/>
    </source>
</evidence>
<evidence type="ECO:0000269" key="3">
    <source>
    </source>
</evidence>
<evidence type="ECO:0000269" key="4">
    <source>
    </source>
</evidence>
<evidence type="ECO:0000305" key="5"/>
<proteinExistence type="evidence at protein level"/>
<name>FATA1_ARATH</name>
<dbReference type="EC" id="3.1.2.14"/>
<dbReference type="EMBL" id="Z36912">
    <property type="protein sequence ID" value="CAA85389.1"/>
    <property type="molecule type" value="mRNA"/>
</dbReference>
<dbReference type="EMBL" id="AB026647">
    <property type="protein sequence ID" value="BAB02069.1"/>
    <property type="molecule type" value="Genomic_DNA"/>
</dbReference>
<dbReference type="EMBL" id="CP002686">
    <property type="protein sequence ID" value="AEE76980.1"/>
    <property type="molecule type" value="Genomic_DNA"/>
</dbReference>
<dbReference type="EMBL" id="AK176105">
    <property type="protein sequence ID" value="BAD43868.1"/>
    <property type="molecule type" value="mRNA"/>
</dbReference>
<dbReference type="PIR" id="S69197">
    <property type="entry name" value="S69197"/>
</dbReference>
<dbReference type="RefSeq" id="NP_189147.1">
    <property type="nucleotide sequence ID" value="NM_113415.4"/>
</dbReference>
<dbReference type="SMR" id="Q42561"/>
<dbReference type="FunCoup" id="Q42561">
    <property type="interactions" value="182"/>
</dbReference>
<dbReference type="STRING" id="3702.Q42561"/>
<dbReference type="PaxDb" id="3702-AT3G25110.1"/>
<dbReference type="ProteomicsDB" id="231016"/>
<dbReference type="EnsemblPlants" id="AT3G25110.1">
    <property type="protein sequence ID" value="AT3G25110.1"/>
    <property type="gene ID" value="AT3G25110"/>
</dbReference>
<dbReference type="GeneID" id="822102"/>
<dbReference type="Gramene" id="AT3G25110.1">
    <property type="protein sequence ID" value="AT3G25110.1"/>
    <property type="gene ID" value="AT3G25110"/>
</dbReference>
<dbReference type="KEGG" id="ath:AT3G25110"/>
<dbReference type="Araport" id="AT3G25110"/>
<dbReference type="TAIR" id="AT3G25110">
    <property type="gene designation" value="FATA"/>
</dbReference>
<dbReference type="eggNOG" id="ENOG502QTE3">
    <property type="taxonomic scope" value="Eukaryota"/>
</dbReference>
<dbReference type="HOGENOM" id="CLU_045466_1_2_1"/>
<dbReference type="InParanoid" id="Q42561"/>
<dbReference type="OMA" id="LVFCPQE"/>
<dbReference type="PhylomeDB" id="Q42561"/>
<dbReference type="BioCyc" id="ARA:AT3G25110-MONOMER"/>
<dbReference type="BioCyc" id="MetaCyc:AT3G25110-MONOMER"/>
<dbReference type="PRO" id="PR:Q42561"/>
<dbReference type="Proteomes" id="UP000006548">
    <property type="component" value="Chromosome 3"/>
</dbReference>
<dbReference type="ExpressionAtlas" id="Q42561">
    <property type="expression patterns" value="baseline and differential"/>
</dbReference>
<dbReference type="GO" id="GO:0009507">
    <property type="term" value="C:chloroplast"/>
    <property type="evidence" value="ECO:0007669"/>
    <property type="project" value="UniProtKB-SubCell"/>
</dbReference>
<dbReference type="GO" id="GO:0016297">
    <property type="term" value="F:fatty acyl-[ACP] hydrolase activity"/>
    <property type="evidence" value="ECO:0000314"/>
    <property type="project" value="TAIR"/>
</dbReference>
<dbReference type="GO" id="GO:0006633">
    <property type="term" value="P:fatty acid biosynthetic process"/>
    <property type="evidence" value="ECO:0000316"/>
    <property type="project" value="UniProtKB"/>
</dbReference>
<dbReference type="CDD" id="cd00586">
    <property type="entry name" value="4HBT"/>
    <property type="match status" value="1"/>
</dbReference>
<dbReference type="FunFam" id="3.10.129.10:FF:000014">
    <property type="entry name" value="Acyl-[acyl-carrier-protein] hydrolase"/>
    <property type="match status" value="1"/>
</dbReference>
<dbReference type="Gene3D" id="3.10.129.10">
    <property type="entry name" value="Hotdog Thioesterase"/>
    <property type="match status" value="1"/>
</dbReference>
<dbReference type="InterPro" id="IPR049427">
    <property type="entry name" value="Acyl-ACP_TE_C"/>
</dbReference>
<dbReference type="InterPro" id="IPR002864">
    <property type="entry name" value="Acyl-ACP_thioesterase_NHD"/>
</dbReference>
<dbReference type="InterPro" id="IPR045023">
    <property type="entry name" value="FATA/B"/>
</dbReference>
<dbReference type="InterPro" id="IPR029069">
    <property type="entry name" value="HotDog_dom_sf"/>
</dbReference>
<dbReference type="PANTHER" id="PTHR31727">
    <property type="entry name" value="OLEOYL-ACYL CARRIER PROTEIN THIOESTERASE 1, CHLOROPLASTIC"/>
    <property type="match status" value="1"/>
</dbReference>
<dbReference type="PANTHER" id="PTHR31727:SF6">
    <property type="entry name" value="OLEOYL-ACYL CARRIER PROTEIN THIOESTERASE 1, CHLOROPLASTIC"/>
    <property type="match status" value="1"/>
</dbReference>
<dbReference type="Pfam" id="PF01643">
    <property type="entry name" value="Acyl-ACP_TE"/>
    <property type="match status" value="1"/>
</dbReference>
<dbReference type="Pfam" id="PF20791">
    <property type="entry name" value="Acyl-ACP_TE_C"/>
    <property type="match status" value="1"/>
</dbReference>
<dbReference type="SUPFAM" id="SSF54637">
    <property type="entry name" value="Thioesterase/thiol ester dehydrase-isomerase"/>
    <property type="match status" value="2"/>
</dbReference>
<sequence length="362" mass="40819">MLKLSCNVTDSKLQRSLLFFSHSYRSDPVNFIRRRIVSCSQTKKTGLVPLRAVVSADQGSVVQGLATLADQLRLGSLTEDGLSYKEKFVVRSYEVGSNKTATVETIANLLQEVGCNHAQSVGFSTDGFATTTTMRKLHLIWVTARMHIEIYKYPAWGDVVEIETWCQSEGRIGTRRDWILKDSVTGEVTGRATSKWVMMNQDTRRLQKVSDDVRDEYLVFCPQEPRLAFPEENNRSLKKIPKLEDPAQYSMIGLKPRRADLDMNQHVNNVTYIGWVLESIPQEIVDTHELQVITLDYRRECQQDDVVDSLTTTTSEIGGTNGSATSGTQGHNDSQFLHLLRLSGDGQEINRGTTLWRKKPSS</sequence>
<comment type="function">
    <text evidence="3 4">Plays an essential role in chain termination during de novo fatty acid synthesis. Possesses high thioesterase activity for oleoyl-ACP versus other acyl-ACPs. Substrate preference is 18:1 &gt; 18:0 &gt; 16:1.</text>
</comment>
<comment type="catalytic activity">
    <reaction evidence="3">
        <text>(9Z)-octadecenoyl-[ACP] + H2O = (9Z)-octadecenoate + holo-[ACP] + H(+)</text>
        <dbReference type="Rhea" id="RHEA:15057"/>
        <dbReference type="Rhea" id="RHEA-COMP:9685"/>
        <dbReference type="Rhea" id="RHEA-COMP:9924"/>
        <dbReference type="ChEBI" id="CHEBI:15377"/>
        <dbReference type="ChEBI" id="CHEBI:15378"/>
        <dbReference type="ChEBI" id="CHEBI:30823"/>
        <dbReference type="ChEBI" id="CHEBI:64479"/>
        <dbReference type="ChEBI" id="CHEBI:78783"/>
        <dbReference type="EC" id="3.1.2.14"/>
    </reaction>
</comment>
<comment type="biophysicochemical properties">
    <kinetics>
        <KM evidence="3">13.9 uM for myristoyl-ACP (14:0-ACP)</KM>
        <KM evidence="3">8.9 uM for myristoleoyl-ACP (14:1-ACP)</KM>
        <KM evidence="3">4.9 uM for palmitoyl-ACP (16:0-ACP)</KM>
        <KM evidence="3">4.9 uM for palmitoleoyl-ACP (16:1-ACP)</KM>
        <KM evidence="3">5 uM for stearoyl-ACP (18:0-ACP)</KM>
        <KM evidence="3">3.1 uM for oleoyl-ACP (18:1-ACP)</KM>
        <text>The catalytic efficiency for 18:1 is at least 20-fold higher than for other substrates.</text>
    </kinetics>
</comment>
<comment type="subcellular location">
    <subcellularLocation>
        <location evidence="5">Plastid</location>
        <location evidence="5">Chloroplast</location>
    </subcellularLocation>
</comment>
<comment type="similarity">
    <text evidence="5">Belongs to the acyl-ACP thioesterase family.</text>
</comment>
<accession>Q42561</accession>
<organism>
    <name type="scientific">Arabidopsis thaliana</name>
    <name type="common">Mouse-ear cress</name>
    <dbReference type="NCBI Taxonomy" id="3702"/>
    <lineage>
        <taxon>Eukaryota</taxon>
        <taxon>Viridiplantae</taxon>
        <taxon>Streptophyta</taxon>
        <taxon>Embryophyta</taxon>
        <taxon>Tracheophyta</taxon>
        <taxon>Spermatophyta</taxon>
        <taxon>Magnoliopsida</taxon>
        <taxon>eudicotyledons</taxon>
        <taxon>Gunneridae</taxon>
        <taxon>Pentapetalae</taxon>
        <taxon>rosids</taxon>
        <taxon>malvids</taxon>
        <taxon>Brassicales</taxon>
        <taxon>Brassicaceae</taxon>
        <taxon>Camelineae</taxon>
        <taxon>Arabidopsis</taxon>
    </lineage>
</organism>
<reference key="1">
    <citation type="journal article" date="1995" name="Arch. Biochem. Biophys.">
        <title>Cloning and expression in Escherichia coli of a novel thioesterase from Arabidopsis thaliana specific for long-chain acyl-acyl carrier proteins.</title>
        <authorList>
            <person name="Dormann P."/>
            <person name="Voelker T.A."/>
            <person name="Ohlrogge J.B."/>
        </authorList>
    </citation>
    <scope>NUCLEOTIDE SEQUENCE [MRNA]</scope>
    <source>
        <strain>cv. Columbia</strain>
        <tissue>Root</tissue>
    </source>
</reference>
<reference key="2">
    <citation type="journal article" date="2000" name="DNA Res.">
        <title>Structural analysis of Arabidopsis thaliana chromosome 3. I. Sequence features of the regions of 4,504,864 bp covered by sixty P1 and TAC clones.</title>
        <authorList>
            <person name="Sato S."/>
            <person name="Nakamura Y."/>
            <person name="Kaneko T."/>
            <person name="Katoh T."/>
            <person name="Asamizu E."/>
            <person name="Tabata S."/>
        </authorList>
    </citation>
    <scope>NUCLEOTIDE SEQUENCE [LARGE SCALE GENOMIC DNA]</scope>
    <source>
        <strain>cv. Columbia</strain>
    </source>
</reference>
<reference key="3">
    <citation type="journal article" date="2017" name="Plant J.">
        <title>Araport11: a complete reannotation of the Arabidopsis thaliana reference genome.</title>
        <authorList>
            <person name="Cheng C.Y."/>
            <person name="Krishnakumar V."/>
            <person name="Chan A.P."/>
            <person name="Thibaud-Nissen F."/>
            <person name="Schobel S."/>
            <person name="Town C.D."/>
        </authorList>
    </citation>
    <scope>GENOME REANNOTATION</scope>
    <source>
        <strain>cv. Columbia</strain>
    </source>
</reference>
<reference key="4">
    <citation type="submission" date="2004-09" db="EMBL/GenBank/DDBJ databases">
        <title>Large-scale analysis of RIKEN Arabidopsis full-length (RAFL) cDNAs.</title>
        <authorList>
            <person name="Totoki Y."/>
            <person name="Seki M."/>
            <person name="Ishida J."/>
            <person name="Nakajima M."/>
            <person name="Enju A."/>
            <person name="Kamiya A."/>
            <person name="Narusaka M."/>
            <person name="Shin-i T."/>
            <person name="Nakagawa M."/>
            <person name="Sakamoto N."/>
            <person name="Oishi K."/>
            <person name="Kohara Y."/>
            <person name="Kobayashi M."/>
            <person name="Toyoda A."/>
            <person name="Sakaki Y."/>
            <person name="Sakurai T."/>
            <person name="Iida K."/>
            <person name="Akiyama K."/>
            <person name="Satou M."/>
            <person name="Toyoda T."/>
            <person name="Konagaya A."/>
            <person name="Carninci P."/>
            <person name="Kawai J."/>
            <person name="Hayashizaki Y."/>
            <person name="Shinozaki K."/>
        </authorList>
    </citation>
    <scope>NUCLEOTIDE SEQUENCE [LARGE SCALE MRNA]</scope>
    <source>
        <strain>cv. Columbia</strain>
    </source>
</reference>
<reference key="5">
    <citation type="journal article" date="2002" name="Arch. Biochem. Biophys.">
        <title>Characterization of substrate specificity of plant FatA and FatB acyl-ACP thioesterases.</title>
        <authorList>
            <person name="Salas J.J."/>
            <person name="Ohlrogge J.B."/>
        </authorList>
    </citation>
    <scope>FUNCTION</scope>
    <scope>CATALYTIC ACTIVITY</scope>
    <scope>BIOPHYSICOCHEMICAL PROPERTIES</scope>
</reference>
<reference key="6">
    <citation type="journal article" date="2012" name="Planta">
        <title>Reduced expression of FatA thioesterases in Arabidopsis affects the oil content and fatty acid composition of the seeds.</title>
        <authorList>
            <person name="Moreno-Perez A.J."/>
            <person name="Venegas-Caleron M."/>
            <person name="Vaistij F.E."/>
            <person name="Salas J.J."/>
            <person name="Larson T.R."/>
            <person name="Garces R."/>
            <person name="Graham I.A."/>
            <person name="Martinez-Force E."/>
        </authorList>
    </citation>
    <scope>FUNCTION</scope>
</reference>
<feature type="transit peptide" description="Chloroplast" evidence="1">
    <location>
        <begin position="1"/>
        <end position="38"/>
    </location>
</feature>
<feature type="chain" id="PRO_0000418153" description="Oleoyl-acyl carrier protein thioesterase 1, chloroplastic">
    <location>
        <begin position="39"/>
        <end position="362"/>
    </location>
</feature>
<feature type="region of interest" description="Disordered" evidence="2">
    <location>
        <begin position="312"/>
        <end position="331"/>
    </location>
</feature>
<feature type="compositionally biased region" description="Polar residues" evidence="2">
    <location>
        <begin position="315"/>
        <end position="331"/>
    </location>
</feature>
<feature type="active site" evidence="1">
    <location>
        <position position="264"/>
    </location>
</feature>
<feature type="active site" evidence="1">
    <location>
        <position position="266"/>
    </location>
</feature>
<feature type="active site" evidence="1">
    <location>
        <position position="301"/>
    </location>
</feature>
<protein>
    <recommendedName>
        <fullName>Oleoyl-acyl carrier protein thioesterase 1, chloroplastic</fullName>
        <ecNumber>3.1.2.14</ecNumber>
    </recommendedName>
    <alternativeName>
        <fullName>18:0-acyl-carrier protein thioesterase</fullName>
        <shortName>18:0-ACP thioesterase</shortName>
    </alternativeName>
    <alternativeName>
        <fullName>Acyl-[acyl-carrier-protein] hydrolase</fullName>
    </alternativeName>
</protein>
<gene>
    <name type="primary">FATA</name>
    <name type="synonym">FATA1</name>
    <name type="ordered locus">At3g25110</name>
    <name type="ORF">MJL12.5</name>
</gene>